<name>SYY_BURTA</name>
<protein>
    <recommendedName>
        <fullName evidence="1">Tyrosine--tRNA ligase</fullName>
        <ecNumber evidence="1">6.1.1.1</ecNumber>
    </recommendedName>
    <alternativeName>
        <fullName evidence="1">Tyrosyl-tRNA synthetase</fullName>
        <shortName evidence="1">TyrRS</shortName>
    </alternativeName>
</protein>
<reference key="1">
    <citation type="journal article" date="2005" name="BMC Genomics">
        <title>Bacterial genome adaptation to niches: divergence of the potential virulence genes in three Burkholderia species of different survival strategies.</title>
        <authorList>
            <person name="Kim H.S."/>
            <person name="Schell M.A."/>
            <person name="Yu Y."/>
            <person name="Ulrich R.L."/>
            <person name="Sarria S.H."/>
            <person name="Nierman W.C."/>
            <person name="DeShazer D."/>
        </authorList>
    </citation>
    <scope>NUCLEOTIDE SEQUENCE [LARGE SCALE GENOMIC DNA]</scope>
    <source>
        <strain>ATCC 700388 / DSM 13276 / CCUG 48851 / CIP 106301 / E264</strain>
    </source>
</reference>
<organism>
    <name type="scientific">Burkholderia thailandensis (strain ATCC 700388 / DSM 13276 / CCUG 48851 / CIP 106301 / E264)</name>
    <dbReference type="NCBI Taxonomy" id="271848"/>
    <lineage>
        <taxon>Bacteria</taxon>
        <taxon>Pseudomonadati</taxon>
        <taxon>Pseudomonadota</taxon>
        <taxon>Betaproteobacteria</taxon>
        <taxon>Burkholderiales</taxon>
        <taxon>Burkholderiaceae</taxon>
        <taxon>Burkholderia</taxon>
        <taxon>pseudomallei group</taxon>
    </lineage>
</organism>
<keyword id="KW-0030">Aminoacyl-tRNA synthetase</keyword>
<keyword id="KW-0067">ATP-binding</keyword>
<keyword id="KW-0963">Cytoplasm</keyword>
<keyword id="KW-0436">Ligase</keyword>
<keyword id="KW-0547">Nucleotide-binding</keyword>
<keyword id="KW-0648">Protein biosynthesis</keyword>
<keyword id="KW-0694">RNA-binding</keyword>
<proteinExistence type="inferred from homology"/>
<evidence type="ECO:0000255" key="1">
    <source>
        <dbReference type="HAMAP-Rule" id="MF_02007"/>
    </source>
</evidence>
<evidence type="ECO:0000305" key="2"/>
<feature type="chain" id="PRO_0000236704" description="Tyrosine--tRNA ligase">
    <location>
        <begin position="1"/>
        <end position="413"/>
    </location>
</feature>
<feature type="domain" description="S4 RNA-binding" evidence="1">
    <location>
        <begin position="351"/>
        <end position="411"/>
    </location>
</feature>
<feature type="short sequence motif" description="'HIGH' region">
    <location>
        <begin position="59"/>
        <end position="68"/>
    </location>
</feature>
<feature type="short sequence motif" description="'KMSKS' region">
    <location>
        <begin position="243"/>
        <end position="247"/>
    </location>
</feature>
<feature type="binding site" evidence="1">
    <location>
        <position position="246"/>
    </location>
    <ligand>
        <name>ATP</name>
        <dbReference type="ChEBI" id="CHEBI:30616"/>
    </ligand>
</feature>
<sequence>MSTDPTSKPAFPITDEIRHALAVTKRGVDELLIEEEFAQKLARSAATGKPLRIKLGLDPTAPDIHLGHTVVLNKMRQLQDLGHTVIFLIGDFTSLIGDPSGRNATRPPLTREQIESNAKTYFEQAALVLDREKTEIRYNSEWSMPLGADGMIKLASRYTVARMLEREDFTKRFQGGIPISIHEFLYPLMQGYDSVALNADLELGGTDQKFNLLVGRELQKQYGQEQQCILTMPLLEGLDGVEKMSKSKGNYVGIGEKPNDMFGKLMSISDVLMWRYFELLSFRSLDEIARLRGEAEGGRNPRDFKVMLAQEIVARFHSQADAERALEDFNHRAKGGVPDDIPTVTLAGAPLAIGQLLKQAGLVPSTSEALRNIEQGGVKIDGATVSDKALKVDAGEFVVQVGKRRFARVTLTA</sequence>
<dbReference type="EC" id="6.1.1.1" evidence="1"/>
<dbReference type="EMBL" id="CP000086">
    <property type="protein sequence ID" value="ABC37870.1"/>
    <property type="status" value="ALT_INIT"/>
    <property type="molecule type" value="Genomic_DNA"/>
</dbReference>
<dbReference type="RefSeq" id="WP_009889128.1">
    <property type="nucleotide sequence ID" value="NZ_CP008785.1"/>
</dbReference>
<dbReference type="SMR" id="Q2SZ62"/>
<dbReference type="GeneID" id="45120989"/>
<dbReference type="KEGG" id="bte:BTH_I1240"/>
<dbReference type="HOGENOM" id="CLU_024003_5_0_4"/>
<dbReference type="Proteomes" id="UP000001930">
    <property type="component" value="Chromosome I"/>
</dbReference>
<dbReference type="GO" id="GO:0005829">
    <property type="term" value="C:cytosol"/>
    <property type="evidence" value="ECO:0007669"/>
    <property type="project" value="TreeGrafter"/>
</dbReference>
<dbReference type="GO" id="GO:0005524">
    <property type="term" value="F:ATP binding"/>
    <property type="evidence" value="ECO:0007669"/>
    <property type="project" value="UniProtKB-UniRule"/>
</dbReference>
<dbReference type="GO" id="GO:0003723">
    <property type="term" value="F:RNA binding"/>
    <property type="evidence" value="ECO:0007669"/>
    <property type="project" value="UniProtKB-KW"/>
</dbReference>
<dbReference type="GO" id="GO:0004831">
    <property type="term" value="F:tyrosine-tRNA ligase activity"/>
    <property type="evidence" value="ECO:0007669"/>
    <property type="project" value="UniProtKB-UniRule"/>
</dbReference>
<dbReference type="GO" id="GO:0006437">
    <property type="term" value="P:tyrosyl-tRNA aminoacylation"/>
    <property type="evidence" value="ECO:0007669"/>
    <property type="project" value="UniProtKB-UniRule"/>
</dbReference>
<dbReference type="CDD" id="cd00165">
    <property type="entry name" value="S4"/>
    <property type="match status" value="1"/>
</dbReference>
<dbReference type="CDD" id="cd00805">
    <property type="entry name" value="TyrRS_core"/>
    <property type="match status" value="1"/>
</dbReference>
<dbReference type="FunFam" id="3.10.290.10:FF:000022">
    <property type="entry name" value="Tyrosine--tRNA ligase"/>
    <property type="match status" value="1"/>
</dbReference>
<dbReference type="FunFam" id="3.40.50.620:FF:000061">
    <property type="entry name" value="Tyrosine--tRNA ligase"/>
    <property type="match status" value="1"/>
</dbReference>
<dbReference type="Gene3D" id="3.40.50.620">
    <property type="entry name" value="HUPs"/>
    <property type="match status" value="1"/>
</dbReference>
<dbReference type="Gene3D" id="3.10.290.10">
    <property type="entry name" value="RNA-binding S4 domain"/>
    <property type="match status" value="1"/>
</dbReference>
<dbReference type="Gene3D" id="1.10.240.10">
    <property type="entry name" value="Tyrosyl-Transfer RNA Synthetase"/>
    <property type="match status" value="1"/>
</dbReference>
<dbReference type="HAMAP" id="MF_02007">
    <property type="entry name" value="Tyr_tRNA_synth_type2"/>
    <property type="match status" value="1"/>
</dbReference>
<dbReference type="InterPro" id="IPR001412">
    <property type="entry name" value="aa-tRNA-synth_I_CS"/>
</dbReference>
<dbReference type="InterPro" id="IPR002305">
    <property type="entry name" value="aa-tRNA-synth_Ic"/>
</dbReference>
<dbReference type="InterPro" id="IPR014729">
    <property type="entry name" value="Rossmann-like_a/b/a_fold"/>
</dbReference>
<dbReference type="InterPro" id="IPR002942">
    <property type="entry name" value="S4_RNA-bd"/>
</dbReference>
<dbReference type="InterPro" id="IPR036986">
    <property type="entry name" value="S4_RNA-bd_sf"/>
</dbReference>
<dbReference type="InterPro" id="IPR002307">
    <property type="entry name" value="Tyr-tRNA-ligase"/>
</dbReference>
<dbReference type="InterPro" id="IPR024088">
    <property type="entry name" value="Tyr-tRNA-ligase_bac-type"/>
</dbReference>
<dbReference type="InterPro" id="IPR024108">
    <property type="entry name" value="Tyr-tRNA-ligase_bac_2"/>
</dbReference>
<dbReference type="NCBIfam" id="TIGR00234">
    <property type="entry name" value="tyrS"/>
    <property type="match status" value="1"/>
</dbReference>
<dbReference type="PANTHER" id="PTHR11766:SF1">
    <property type="entry name" value="TYROSINE--TRNA LIGASE"/>
    <property type="match status" value="1"/>
</dbReference>
<dbReference type="PANTHER" id="PTHR11766">
    <property type="entry name" value="TYROSYL-TRNA SYNTHETASE"/>
    <property type="match status" value="1"/>
</dbReference>
<dbReference type="Pfam" id="PF01479">
    <property type="entry name" value="S4"/>
    <property type="match status" value="1"/>
</dbReference>
<dbReference type="Pfam" id="PF00579">
    <property type="entry name" value="tRNA-synt_1b"/>
    <property type="match status" value="1"/>
</dbReference>
<dbReference type="PRINTS" id="PR01040">
    <property type="entry name" value="TRNASYNTHTYR"/>
</dbReference>
<dbReference type="SMART" id="SM00363">
    <property type="entry name" value="S4"/>
    <property type="match status" value="1"/>
</dbReference>
<dbReference type="SUPFAM" id="SSF55174">
    <property type="entry name" value="Alpha-L RNA-binding motif"/>
    <property type="match status" value="1"/>
</dbReference>
<dbReference type="SUPFAM" id="SSF52374">
    <property type="entry name" value="Nucleotidylyl transferase"/>
    <property type="match status" value="1"/>
</dbReference>
<dbReference type="PROSITE" id="PS00178">
    <property type="entry name" value="AA_TRNA_LIGASE_I"/>
    <property type="match status" value="1"/>
</dbReference>
<dbReference type="PROSITE" id="PS50889">
    <property type="entry name" value="S4"/>
    <property type="match status" value="1"/>
</dbReference>
<gene>
    <name evidence="1" type="primary">tyrS</name>
    <name type="ordered locus">BTH_I1240</name>
</gene>
<accession>Q2SZ62</accession>
<comment type="function">
    <text evidence="1">Catalyzes the attachment of tyrosine to tRNA(Tyr) in a two-step reaction: tyrosine is first activated by ATP to form Tyr-AMP and then transferred to the acceptor end of tRNA(Tyr).</text>
</comment>
<comment type="catalytic activity">
    <reaction evidence="1">
        <text>tRNA(Tyr) + L-tyrosine + ATP = L-tyrosyl-tRNA(Tyr) + AMP + diphosphate + H(+)</text>
        <dbReference type="Rhea" id="RHEA:10220"/>
        <dbReference type="Rhea" id="RHEA-COMP:9706"/>
        <dbReference type="Rhea" id="RHEA-COMP:9707"/>
        <dbReference type="ChEBI" id="CHEBI:15378"/>
        <dbReference type="ChEBI" id="CHEBI:30616"/>
        <dbReference type="ChEBI" id="CHEBI:33019"/>
        <dbReference type="ChEBI" id="CHEBI:58315"/>
        <dbReference type="ChEBI" id="CHEBI:78442"/>
        <dbReference type="ChEBI" id="CHEBI:78536"/>
        <dbReference type="ChEBI" id="CHEBI:456215"/>
        <dbReference type="EC" id="6.1.1.1"/>
    </reaction>
</comment>
<comment type="subunit">
    <text evidence="1">Homodimer.</text>
</comment>
<comment type="subcellular location">
    <subcellularLocation>
        <location evidence="1">Cytoplasm</location>
    </subcellularLocation>
</comment>
<comment type="similarity">
    <text evidence="1">Belongs to the class-I aminoacyl-tRNA synthetase family. TyrS type 2 subfamily.</text>
</comment>
<comment type="sequence caution" evidence="2">
    <conflict type="erroneous initiation">
        <sequence resource="EMBL-CDS" id="ABC37870"/>
    </conflict>
</comment>